<reference key="1">
    <citation type="journal article" date="1992" name="Virology">
        <title>The DNA sequence of equine herpesvirus-1.</title>
        <authorList>
            <person name="Telford E.A.R."/>
            <person name="Watson M.S."/>
            <person name="McBride K."/>
            <person name="Davison A.J."/>
        </authorList>
    </citation>
    <scope>NUCLEOTIDE SEQUENCE [LARGE SCALE GENOMIC DNA]</scope>
</reference>
<gene>
    <name type="ordered locus">51</name>
</gene>
<comment type="function">
    <text evidence="1">Plays an important role in the cytoplasmic envelopment of tegument proteins and capsids during the assembly and egress processes. Also participates in viral entry at the fusion step probably by regulating the core fusion machinery.</text>
</comment>
<comment type="subunit">
    <text evidence="1">Interacts with cytoplasmic envelopment protein 2; this interaction is essential for the proper localization of each protein to the assembly complex and thus for the production of infectious virus.</text>
</comment>
<comment type="subcellular location">
    <subcellularLocation>
        <location evidence="1">Virion tegument</location>
    </subcellularLocation>
    <subcellularLocation>
        <location evidence="1">Virion membrane</location>
        <topology evidence="1">Lipid-anchor</topology>
    </subcellularLocation>
    <subcellularLocation>
        <location evidence="1">Host cell membrane</location>
        <topology evidence="1">Lipid-anchor</topology>
        <orientation evidence="1">Cytoplasmic side</orientation>
    </subcellularLocation>
    <subcellularLocation>
        <location evidence="1">Host Golgi apparatus membrane</location>
        <topology evidence="1">Lipid-anchor</topology>
        <orientation evidence="1">Cytoplasmic side</orientation>
    </subcellularLocation>
    <text evidence="1">Virion membrane-associated tegument protein. Associates with host membrane lipids rafts. During virion morphogenesis, this protein probably accumulates in the endosomes and trans-Golgi where secondary envelopment occurs. It is probably transported to the cell surface from where it is endocytosed and directed to the trans-Golgi network (TGN).</text>
</comment>
<comment type="PTM">
    <text evidence="1">Myristoylation and palmitoylation (probably on one or more of the nearby cysteines at the N-terminus) enable membrane-binding and Golgi apparatus-specific targeting and are essential for efficient packaging.</text>
</comment>
<comment type="PTM">
    <text evidence="1">Phosphorylated. Phosphorylation does not seem to be required for recycling to the host Golgi apparatus. Packaging is selective for underphosphorylated forms.</text>
</comment>
<comment type="similarity">
    <text evidence="1">Belongs to the herpesviridae cytoplasmic envelopment protein 3 family.</text>
</comment>
<protein>
    <recommendedName>
        <fullName evidence="1">Cytoplasmic envelopment protein 3</fullName>
    </recommendedName>
</protein>
<accession>P28982</accession>
<accession>Q6S6S1</accession>
<name>CEP3_EHV1B</name>
<evidence type="ECO:0000255" key="1">
    <source>
        <dbReference type="HAMAP-Rule" id="MF_04040"/>
    </source>
</evidence>
<evidence type="ECO:0000256" key="2">
    <source>
        <dbReference type="SAM" id="MobiDB-lite"/>
    </source>
</evidence>
<organism>
    <name type="scientific">Equine herpesvirus 1 (strain Ab4p)</name>
    <name type="common">EHV-1</name>
    <name type="synonym">Equine abortion virus</name>
    <dbReference type="NCBI Taxonomy" id="31520"/>
    <lineage>
        <taxon>Viruses</taxon>
        <taxon>Duplodnaviria</taxon>
        <taxon>Heunggongvirae</taxon>
        <taxon>Peploviricota</taxon>
        <taxon>Herviviricetes</taxon>
        <taxon>Herpesvirales</taxon>
        <taxon>Orthoherpesviridae</taxon>
        <taxon>Alphaherpesvirinae</taxon>
        <taxon>Varicellovirus</taxon>
        <taxon>Varicellovirus equidalpha1</taxon>
        <taxon>Equid alphaherpesvirus 1</taxon>
    </lineage>
</organism>
<sequence length="74" mass="8409">MGQRLSCGCFRTDQLVTHSGEVVSLNADTFEEFSMEEFDIPPPPPLPKPVFKQPGPYKIPARSQRCPSKRRDPY</sequence>
<organismHost>
    <name type="scientific">Equus caballus</name>
    <name type="common">Horse</name>
    <dbReference type="NCBI Taxonomy" id="9796"/>
</organismHost>
<dbReference type="EMBL" id="AY665713">
    <property type="protein sequence ID" value="AAT67308.1"/>
    <property type="molecule type" value="Genomic_DNA"/>
</dbReference>
<dbReference type="PIR" id="F36800">
    <property type="entry name" value="F36800"/>
</dbReference>
<dbReference type="KEGG" id="vg:2948559"/>
<dbReference type="Proteomes" id="UP000001189">
    <property type="component" value="Segment"/>
</dbReference>
<dbReference type="GO" id="GO:0044178">
    <property type="term" value="C:host cell Golgi membrane"/>
    <property type="evidence" value="ECO:0007669"/>
    <property type="project" value="UniProtKB-SubCell"/>
</dbReference>
<dbReference type="GO" id="GO:0020002">
    <property type="term" value="C:host cell plasma membrane"/>
    <property type="evidence" value="ECO:0007669"/>
    <property type="project" value="UniProtKB-SubCell"/>
</dbReference>
<dbReference type="GO" id="GO:0016020">
    <property type="term" value="C:membrane"/>
    <property type="evidence" value="ECO:0007669"/>
    <property type="project" value="UniProtKB-KW"/>
</dbReference>
<dbReference type="GO" id="GO:0019033">
    <property type="term" value="C:viral tegument"/>
    <property type="evidence" value="ECO:0007669"/>
    <property type="project" value="UniProtKB-SubCell"/>
</dbReference>
<dbReference type="GO" id="GO:0055036">
    <property type="term" value="C:virion membrane"/>
    <property type="evidence" value="ECO:0007669"/>
    <property type="project" value="UniProtKB-SubCell"/>
</dbReference>
<dbReference type="GO" id="GO:0009653">
    <property type="term" value="P:anatomical structure morphogenesis"/>
    <property type="evidence" value="ECO:0007669"/>
    <property type="project" value="UniProtKB-UniRule"/>
</dbReference>
<dbReference type="GO" id="GO:0046760">
    <property type="term" value="P:viral budding from Golgi membrane"/>
    <property type="evidence" value="ECO:0007669"/>
    <property type="project" value="UniProtKB-UniRule"/>
</dbReference>
<dbReference type="HAMAP" id="MF_04040">
    <property type="entry name" value="HSV_CEP3_alphahv"/>
    <property type="match status" value="1"/>
</dbReference>
<dbReference type="InterPro" id="IPR024351">
    <property type="entry name" value="Tegument_UL11_Herpesvir"/>
</dbReference>
<dbReference type="Pfam" id="PF11094">
    <property type="entry name" value="UL11"/>
    <property type="match status" value="1"/>
</dbReference>
<keyword id="KW-1032">Host cell membrane</keyword>
<keyword id="KW-1040">Host Golgi apparatus</keyword>
<keyword id="KW-1043">Host membrane</keyword>
<keyword id="KW-0449">Lipoprotein</keyword>
<keyword id="KW-0472">Membrane</keyword>
<keyword id="KW-0519">Myristate</keyword>
<keyword id="KW-0564">Palmitate</keyword>
<keyword id="KW-0597">Phosphoprotein</keyword>
<keyword id="KW-1185">Reference proteome</keyword>
<keyword id="KW-0946">Virion</keyword>
<keyword id="KW-0920">Virion tegument</keyword>
<proteinExistence type="inferred from homology"/>
<feature type="initiator methionine" description="Removed; by host" evidence="1">
    <location>
        <position position="1"/>
    </location>
</feature>
<feature type="chain" id="PRO_0000115927" description="Cytoplasmic envelopment protein 3" evidence="1">
    <location>
        <begin position="2"/>
        <end position="74"/>
    </location>
</feature>
<feature type="region of interest" description="Asp/Glu-rich (acidic)" evidence="1">
    <location>
        <begin position="34"/>
        <end position="40"/>
    </location>
</feature>
<feature type="region of interest" description="Disordered" evidence="2">
    <location>
        <begin position="36"/>
        <end position="74"/>
    </location>
</feature>
<feature type="short sequence motif" description="Di-leucine-like internalization motif" evidence="1">
    <location>
        <begin position="15"/>
        <end position="16"/>
    </location>
</feature>
<feature type="lipid moiety-binding region" description="N-myristoyl glycine; by host" evidence="1">
    <location>
        <position position="2"/>
    </location>
</feature>